<reference key="1">
    <citation type="journal article" date="2015" name="Genome Announc.">
        <title>Complete genome sequence of Anaeromyxobacter sp. Fw109-5, an anaerobic, metal-reducing bacterium isolated from a contaminated subsurface environment.</title>
        <authorList>
            <person name="Hwang C."/>
            <person name="Copeland A."/>
            <person name="Lucas S."/>
            <person name="Lapidus A."/>
            <person name="Barry K."/>
            <person name="Glavina Del Rio T."/>
            <person name="Dalin E."/>
            <person name="Tice H."/>
            <person name="Pitluck S."/>
            <person name="Sims D."/>
            <person name="Brettin T."/>
            <person name="Bruce D.C."/>
            <person name="Detter J.C."/>
            <person name="Han C.S."/>
            <person name="Schmutz J."/>
            <person name="Larimer F.W."/>
            <person name="Land M.L."/>
            <person name="Hauser L.J."/>
            <person name="Kyrpides N."/>
            <person name="Lykidis A."/>
            <person name="Richardson P."/>
            <person name="Belieav A."/>
            <person name="Sanford R.A."/>
            <person name="Loeffler F.E."/>
            <person name="Fields M.W."/>
        </authorList>
    </citation>
    <scope>NUCLEOTIDE SEQUENCE [LARGE SCALE GENOMIC DNA]</scope>
    <source>
        <strain>Fw109-5</strain>
    </source>
</reference>
<protein>
    <recommendedName>
        <fullName evidence="1">Glutamate-1-semialdehyde 2,1-aminomutase</fullName>
        <shortName evidence="1">GSA</shortName>
        <ecNumber evidence="1">5.4.3.8</ecNumber>
    </recommendedName>
    <alternativeName>
        <fullName evidence="1">Glutamate-1-semialdehyde aminotransferase</fullName>
        <shortName evidence="1">GSA-AT</shortName>
    </alternativeName>
</protein>
<sequence length="429" mass="45315">MKTELSEKLFAKAQTLFPGGVNSPVRAFRGVGGTPRFIARGKGSHLFDVDGNDYVDYVLSWGPMIVGHAHPEVMREVQDAMKEGASFGAPSPREITLAELVRERMPWIEKMRFCSSGTEATTAAIRVARGFTSRDDILKFEGCYHGAGDPLLVKAGSGVETLGLPDSPGVPADLAKHTLTLPYNDLAAVERLFAERGGSIACVIIEPVVGNMGVLVPKDGYLQGLLALCRKHGALFIVDEVMTGFRVSSGGACGLFGVRPDLVTFGKVIGGGLPVGAFGGRADVMDRVAPAGPIYQAGTLSGNPMAMAAGHATLRLMTGAAYEKLERLSAKLADGLRERAAAAKVPVQVNRVGSMLTVFFAEQPVFDAASARAASTKRFGAFFHRMLEGGAYLPPSQFEAAFLSTAHSEGDVEQTLHASEAAFAEAAKV</sequence>
<gene>
    <name evidence="1" type="primary">hemL</name>
    <name type="ordered locus">Anae109_4491</name>
</gene>
<comment type="catalytic activity">
    <reaction evidence="1">
        <text>(S)-4-amino-5-oxopentanoate = 5-aminolevulinate</text>
        <dbReference type="Rhea" id="RHEA:14265"/>
        <dbReference type="ChEBI" id="CHEBI:57501"/>
        <dbReference type="ChEBI" id="CHEBI:356416"/>
        <dbReference type="EC" id="5.4.3.8"/>
    </reaction>
</comment>
<comment type="cofactor">
    <cofactor evidence="1">
        <name>pyridoxal 5'-phosphate</name>
        <dbReference type="ChEBI" id="CHEBI:597326"/>
    </cofactor>
</comment>
<comment type="pathway">
    <text evidence="1">Porphyrin-containing compound metabolism; protoporphyrin-IX biosynthesis; 5-aminolevulinate from L-glutamyl-tRNA(Glu): step 2/2.</text>
</comment>
<comment type="subunit">
    <text evidence="1">Homodimer.</text>
</comment>
<comment type="subcellular location">
    <subcellularLocation>
        <location evidence="1">Cytoplasm</location>
    </subcellularLocation>
</comment>
<comment type="similarity">
    <text evidence="1">Belongs to the class-III pyridoxal-phosphate-dependent aminotransferase family. HemL subfamily.</text>
</comment>
<name>GSA_ANADF</name>
<accession>A7HIX3</accession>
<proteinExistence type="inferred from homology"/>
<keyword id="KW-0963">Cytoplasm</keyword>
<keyword id="KW-0413">Isomerase</keyword>
<keyword id="KW-0627">Porphyrin biosynthesis</keyword>
<keyword id="KW-0663">Pyridoxal phosphate</keyword>
<keyword id="KW-1185">Reference proteome</keyword>
<evidence type="ECO:0000255" key="1">
    <source>
        <dbReference type="HAMAP-Rule" id="MF_00375"/>
    </source>
</evidence>
<organism>
    <name type="scientific">Anaeromyxobacter sp. (strain Fw109-5)</name>
    <dbReference type="NCBI Taxonomy" id="404589"/>
    <lineage>
        <taxon>Bacteria</taxon>
        <taxon>Pseudomonadati</taxon>
        <taxon>Myxococcota</taxon>
        <taxon>Myxococcia</taxon>
        <taxon>Myxococcales</taxon>
        <taxon>Cystobacterineae</taxon>
        <taxon>Anaeromyxobacteraceae</taxon>
        <taxon>Anaeromyxobacter</taxon>
    </lineage>
</organism>
<dbReference type="EC" id="5.4.3.8" evidence="1"/>
<dbReference type="EMBL" id="CP000769">
    <property type="protein sequence ID" value="ABS28669.1"/>
    <property type="molecule type" value="Genomic_DNA"/>
</dbReference>
<dbReference type="RefSeq" id="WP_012099319.1">
    <property type="nucleotide sequence ID" value="NC_009675.1"/>
</dbReference>
<dbReference type="SMR" id="A7HIX3"/>
<dbReference type="STRING" id="404589.Anae109_4491"/>
<dbReference type="KEGG" id="afw:Anae109_4491"/>
<dbReference type="eggNOG" id="COG0001">
    <property type="taxonomic scope" value="Bacteria"/>
</dbReference>
<dbReference type="HOGENOM" id="CLU_016922_1_5_7"/>
<dbReference type="OrthoDB" id="9801834at2"/>
<dbReference type="UniPathway" id="UPA00251">
    <property type="reaction ID" value="UER00317"/>
</dbReference>
<dbReference type="Proteomes" id="UP000006382">
    <property type="component" value="Chromosome"/>
</dbReference>
<dbReference type="GO" id="GO:0005737">
    <property type="term" value="C:cytoplasm"/>
    <property type="evidence" value="ECO:0007669"/>
    <property type="project" value="UniProtKB-SubCell"/>
</dbReference>
<dbReference type="GO" id="GO:0042286">
    <property type="term" value="F:glutamate-1-semialdehyde 2,1-aminomutase activity"/>
    <property type="evidence" value="ECO:0007669"/>
    <property type="project" value="UniProtKB-UniRule"/>
</dbReference>
<dbReference type="GO" id="GO:0030170">
    <property type="term" value="F:pyridoxal phosphate binding"/>
    <property type="evidence" value="ECO:0007669"/>
    <property type="project" value="InterPro"/>
</dbReference>
<dbReference type="GO" id="GO:0008483">
    <property type="term" value="F:transaminase activity"/>
    <property type="evidence" value="ECO:0007669"/>
    <property type="project" value="InterPro"/>
</dbReference>
<dbReference type="GO" id="GO:0006782">
    <property type="term" value="P:protoporphyrinogen IX biosynthetic process"/>
    <property type="evidence" value="ECO:0007669"/>
    <property type="project" value="UniProtKB-UniRule"/>
</dbReference>
<dbReference type="CDD" id="cd00610">
    <property type="entry name" value="OAT_like"/>
    <property type="match status" value="1"/>
</dbReference>
<dbReference type="FunFam" id="3.40.640.10:FF:000021">
    <property type="entry name" value="Glutamate-1-semialdehyde 2,1-aminomutase"/>
    <property type="match status" value="1"/>
</dbReference>
<dbReference type="Gene3D" id="3.90.1150.10">
    <property type="entry name" value="Aspartate Aminotransferase, domain 1"/>
    <property type="match status" value="1"/>
</dbReference>
<dbReference type="Gene3D" id="3.40.640.10">
    <property type="entry name" value="Type I PLP-dependent aspartate aminotransferase-like (Major domain)"/>
    <property type="match status" value="1"/>
</dbReference>
<dbReference type="HAMAP" id="MF_00375">
    <property type="entry name" value="HemL_aminotrans_3"/>
    <property type="match status" value="1"/>
</dbReference>
<dbReference type="InterPro" id="IPR004639">
    <property type="entry name" value="4pyrrol_synth_GluAld_NH2Trfase"/>
</dbReference>
<dbReference type="InterPro" id="IPR005814">
    <property type="entry name" value="Aminotrans_3"/>
</dbReference>
<dbReference type="InterPro" id="IPR049704">
    <property type="entry name" value="Aminotrans_3_PPA_site"/>
</dbReference>
<dbReference type="InterPro" id="IPR015424">
    <property type="entry name" value="PyrdxlP-dep_Trfase"/>
</dbReference>
<dbReference type="InterPro" id="IPR015421">
    <property type="entry name" value="PyrdxlP-dep_Trfase_major"/>
</dbReference>
<dbReference type="InterPro" id="IPR015422">
    <property type="entry name" value="PyrdxlP-dep_Trfase_small"/>
</dbReference>
<dbReference type="NCBIfam" id="TIGR00713">
    <property type="entry name" value="hemL"/>
    <property type="match status" value="1"/>
</dbReference>
<dbReference type="NCBIfam" id="NF000818">
    <property type="entry name" value="PRK00062.1"/>
    <property type="match status" value="1"/>
</dbReference>
<dbReference type="PANTHER" id="PTHR43713">
    <property type="entry name" value="GLUTAMATE-1-SEMIALDEHYDE 2,1-AMINOMUTASE"/>
    <property type="match status" value="1"/>
</dbReference>
<dbReference type="PANTHER" id="PTHR43713:SF3">
    <property type="entry name" value="GLUTAMATE-1-SEMIALDEHYDE 2,1-AMINOMUTASE 1, CHLOROPLASTIC-RELATED"/>
    <property type="match status" value="1"/>
</dbReference>
<dbReference type="Pfam" id="PF00202">
    <property type="entry name" value="Aminotran_3"/>
    <property type="match status" value="1"/>
</dbReference>
<dbReference type="SUPFAM" id="SSF53383">
    <property type="entry name" value="PLP-dependent transferases"/>
    <property type="match status" value="1"/>
</dbReference>
<dbReference type="PROSITE" id="PS00600">
    <property type="entry name" value="AA_TRANSFER_CLASS_3"/>
    <property type="match status" value="1"/>
</dbReference>
<feature type="chain" id="PRO_1000059976" description="Glutamate-1-semialdehyde 2,1-aminomutase">
    <location>
        <begin position="1"/>
        <end position="429"/>
    </location>
</feature>
<feature type="modified residue" description="N6-(pyridoxal phosphate)lysine" evidence="1">
    <location>
        <position position="267"/>
    </location>
</feature>